<sequence length="156" mass="17578">MPRRRVAAKREILDDPKYGSQILAKFMNHVMESGKKAVAERIVYGALDTVKARKNSDPLEIFEKALDAIAPLVEVKSRRVGGATYQVPVEVRPSRRNALAMRWLVDYARKRGEKSMALRLAGELLDAAEGKGAAVKKREDVHRMAEANKAFSHYRF</sequence>
<feature type="chain" id="PRO_0000124323" description="Small ribosomal subunit protein uS7">
    <location>
        <begin position="1"/>
        <end position="156"/>
    </location>
</feature>
<comment type="function">
    <text evidence="1">One of the primary rRNA binding proteins, it binds directly to 16S rRNA where it nucleates assembly of the head domain of the 30S subunit. Is located at the subunit interface close to the decoding center, probably blocks exit of the E-site tRNA.</text>
</comment>
<comment type="subunit">
    <text evidence="1">Part of the 30S ribosomal subunit. Contacts proteins S9 and S11.</text>
</comment>
<comment type="similarity">
    <text evidence="1">Belongs to the universal ribosomal protein uS7 family.</text>
</comment>
<reference key="1">
    <citation type="journal article" date="2002" name="Environ. Microbiol.">
        <title>Complete genome sequence and comparative analysis of the metabolically versatile Pseudomonas putida KT2440.</title>
        <authorList>
            <person name="Nelson K.E."/>
            <person name="Weinel C."/>
            <person name="Paulsen I.T."/>
            <person name="Dodson R.J."/>
            <person name="Hilbert H."/>
            <person name="Martins dos Santos V.A.P."/>
            <person name="Fouts D.E."/>
            <person name="Gill S.R."/>
            <person name="Pop M."/>
            <person name="Holmes M."/>
            <person name="Brinkac L.M."/>
            <person name="Beanan M.J."/>
            <person name="DeBoy R.T."/>
            <person name="Daugherty S.C."/>
            <person name="Kolonay J.F."/>
            <person name="Madupu R."/>
            <person name="Nelson W.C."/>
            <person name="White O."/>
            <person name="Peterson J.D."/>
            <person name="Khouri H.M."/>
            <person name="Hance I."/>
            <person name="Chris Lee P."/>
            <person name="Holtzapple E.K."/>
            <person name="Scanlan D."/>
            <person name="Tran K."/>
            <person name="Moazzez A."/>
            <person name="Utterback T.R."/>
            <person name="Rizzo M."/>
            <person name="Lee K."/>
            <person name="Kosack D."/>
            <person name="Moestl D."/>
            <person name="Wedler H."/>
            <person name="Lauber J."/>
            <person name="Stjepandic D."/>
            <person name="Hoheisel J."/>
            <person name="Straetz M."/>
            <person name="Heim S."/>
            <person name="Kiewitz C."/>
            <person name="Eisen J.A."/>
            <person name="Timmis K.N."/>
            <person name="Duesterhoeft A."/>
            <person name="Tuemmler B."/>
            <person name="Fraser C.M."/>
        </authorList>
    </citation>
    <scope>NUCLEOTIDE SEQUENCE [LARGE SCALE GENOMIC DNA]</scope>
    <source>
        <strain>ATCC 47054 / DSM 6125 / CFBP 8728 / NCIMB 11950 / KT2440</strain>
    </source>
</reference>
<name>RS7_PSEPK</name>
<accession>Q88QN9</accession>
<proteinExistence type="inferred from homology"/>
<organism>
    <name type="scientific">Pseudomonas putida (strain ATCC 47054 / DSM 6125 / CFBP 8728 / NCIMB 11950 / KT2440)</name>
    <dbReference type="NCBI Taxonomy" id="160488"/>
    <lineage>
        <taxon>Bacteria</taxon>
        <taxon>Pseudomonadati</taxon>
        <taxon>Pseudomonadota</taxon>
        <taxon>Gammaproteobacteria</taxon>
        <taxon>Pseudomonadales</taxon>
        <taxon>Pseudomonadaceae</taxon>
        <taxon>Pseudomonas</taxon>
    </lineage>
</organism>
<protein>
    <recommendedName>
        <fullName evidence="1">Small ribosomal subunit protein uS7</fullName>
    </recommendedName>
    <alternativeName>
        <fullName evidence="2">30S ribosomal protein S7</fullName>
    </alternativeName>
</protein>
<keyword id="KW-1185">Reference proteome</keyword>
<keyword id="KW-0687">Ribonucleoprotein</keyword>
<keyword id="KW-0689">Ribosomal protein</keyword>
<keyword id="KW-0694">RNA-binding</keyword>
<keyword id="KW-0699">rRNA-binding</keyword>
<keyword id="KW-0820">tRNA-binding</keyword>
<gene>
    <name evidence="1" type="primary">rpsG</name>
    <name type="ordered locus">PP_0450</name>
</gene>
<evidence type="ECO:0000255" key="1">
    <source>
        <dbReference type="HAMAP-Rule" id="MF_00480"/>
    </source>
</evidence>
<evidence type="ECO:0000305" key="2"/>
<dbReference type="EMBL" id="AE015451">
    <property type="protein sequence ID" value="AAN66080.1"/>
    <property type="molecule type" value="Genomic_DNA"/>
</dbReference>
<dbReference type="RefSeq" id="NP_742616.1">
    <property type="nucleotide sequence ID" value="NC_002947.4"/>
</dbReference>
<dbReference type="RefSeq" id="WP_003246741.1">
    <property type="nucleotide sequence ID" value="NZ_CP169744.1"/>
</dbReference>
<dbReference type="SMR" id="Q88QN9"/>
<dbReference type="STRING" id="160488.PP_0450"/>
<dbReference type="PaxDb" id="160488-PP_0450"/>
<dbReference type="GeneID" id="97165975"/>
<dbReference type="KEGG" id="ppu:PP_0450"/>
<dbReference type="PATRIC" id="fig|160488.4.peg.482"/>
<dbReference type="eggNOG" id="COG0049">
    <property type="taxonomic scope" value="Bacteria"/>
</dbReference>
<dbReference type="HOGENOM" id="CLU_072226_1_1_6"/>
<dbReference type="OrthoDB" id="9807653at2"/>
<dbReference type="PhylomeDB" id="Q88QN9"/>
<dbReference type="BioCyc" id="PPUT160488:G1G01-496-MONOMER"/>
<dbReference type="PRO" id="PR:Q88QN9"/>
<dbReference type="Proteomes" id="UP000000556">
    <property type="component" value="Chromosome"/>
</dbReference>
<dbReference type="GO" id="GO:0015935">
    <property type="term" value="C:small ribosomal subunit"/>
    <property type="evidence" value="ECO:0007669"/>
    <property type="project" value="InterPro"/>
</dbReference>
<dbReference type="GO" id="GO:0019843">
    <property type="term" value="F:rRNA binding"/>
    <property type="evidence" value="ECO:0007669"/>
    <property type="project" value="UniProtKB-UniRule"/>
</dbReference>
<dbReference type="GO" id="GO:0003735">
    <property type="term" value="F:structural constituent of ribosome"/>
    <property type="evidence" value="ECO:0007669"/>
    <property type="project" value="InterPro"/>
</dbReference>
<dbReference type="GO" id="GO:0000049">
    <property type="term" value="F:tRNA binding"/>
    <property type="evidence" value="ECO:0007669"/>
    <property type="project" value="UniProtKB-UniRule"/>
</dbReference>
<dbReference type="GO" id="GO:0006412">
    <property type="term" value="P:translation"/>
    <property type="evidence" value="ECO:0007669"/>
    <property type="project" value="UniProtKB-UniRule"/>
</dbReference>
<dbReference type="CDD" id="cd14869">
    <property type="entry name" value="uS7_Bacteria"/>
    <property type="match status" value="1"/>
</dbReference>
<dbReference type="FunFam" id="1.10.455.10:FF:000001">
    <property type="entry name" value="30S ribosomal protein S7"/>
    <property type="match status" value="1"/>
</dbReference>
<dbReference type="Gene3D" id="1.10.455.10">
    <property type="entry name" value="Ribosomal protein S7 domain"/>
    <property type="match status" value="1"/>
</dbReference>
<dbReference type="HAMAP" id="MF_00480_B">
    <property type="entry name" value="Ribosomal_uS7_B"/>
    <property type="match status" value="1"/>
</dbReference>
<dbReference type="InterPro" id="IPR000235">
    <property type="entry name" value="Ribosomal_uS7"/>
</dbReference>
<dbReference type="InterPro" id="IPR005717">
    <property type="entry name" value="Ribosomal_uS7_bac/org-type"/>
</dbReference>
<dbReference type="InterPro" id="IPR020606">
    <property type="entry name" value="Ribosomal_uS7_CS"/>
</dbReference>
<dbReference type="InterPro" id="IPR023798">
    <property type="entry name" value="Ribosomal_uS7_dom"/>
</dbReference>
<dbReference type="InterPro" id="IPR036823">
    <property type="entry name" value="Ribosomal_uS7_dom_sf"/>
</dbReference>
<dbReference type="NCBIfam" id="TIGR01029">
    <property type="entry name" value="rpsG_bact"/>
    <property type="match status" value="1"/>
</dbReference>
<dbReference type="PANTHER" id="PTHR11205">
    <property type="entry name" value="RIBOSOMAL PROTEIN S7"/>
    <property type="match status" value="1"/>
</dbReference>
<dbReference type="Pfam" id="PF00177">
    <property type="entry name" value="Ribosomal_S7"/>
    <property type="match status" value="1"/>
</dbReference>
<dbReference type="PIRSF" id="PIRSF002122">
    <property type="entry name" value="RPS7p_RPS7a_RPS5e_RPS7o"/>
    <property type="match status" value="1"/>
</dbReference>
<dbReference type="SUPFAM" id="SSF47973">
    <property type="entry name" value="Ribosomal protein S7"/>
    <property type="match status" value="1"/>
</dbReference>
<dbReference type="PROSITE" id="PS00052">
    <property type="entry name" value="RIBOSOMAL_S7"/>
    <property type="match status" value="1"/>
</dbReference>